<accession>O48929</accession>
<feature type="chain" id="PRO_0000081423" description="Ethylene receptor">
    <location>
        <begin position="1"/>
        <end position="738"/>
    </location>
</feature>
<feature type="transmembrane region" description="Helical" evidence="2">
    <location>
        <begin position="22"/>
        <end position="42"/>
    </location>
</feature>
<feature type="transmembrane region" description="Helical" evidence="2">
    <location>
        <begin position="53"/>
        <end position="73"/>
    </location>
</feature>
<feature type="transmembrane region" description="Helical" evidence="2">
    <location>
        <begin position="91"/>
        <end position="111"/>
    </location>
</feature>
<feature type="domain" description="GAF">
    <location>
        <begin position="157"/>
        <end position="305"/>
    </location>
</feature>
<feature type="domain" description="Histidine kinase" evidence="3">
    <location>
        <begin position="348"/>
        <end position="585"/>
    </location>
</feature>
<feature type="domain" description="Response regulatory" evidence="4">
    <location>
        <begin position="613"/>
        <end position="730"/>
    </location>
</feature>
<feature type="binding site" evidence="1">
    <location>
        <position position="64"/>
    </location>
    <ligand>
        <name>Cu cation</name>
        <dbReference type="ChEBI" id="CHEBI:23378"/>
    </ligand>
</feature>
<feature type="binding site" evidence="1">
    <location>
        <position position="68"/>
    </location>
    <ligand>
        <name>Cu cation</name>
        <dbReference type="ChEBI" id="CHEBI:23378"/>
    </ligand>
</feature>
<feature type="modified residue" description="Phosphohistidine; by autocatalysis" evidence="3">
    <location>
        <position position="351"/>
    </location>
</feature>
<feature type="modified residue" description="4-aspartylphosphate" evidence="4">
    <location>
        <position position="661"/>
    </location>
</feature>
<feature type="disulfide bond" description="Interchain" evidence="1">
    <location>
        <position position="3"/>
    </location>
</feature>
<feature type="disulfide bond" description="Interchain" evidence="1">
    <location>
        <position position="5"/>
    </location>
</feature>
<keyword id="KW-0067">ATP-binding</keyword>
<keyword id="KW-0186">Copper</keyword>
<keyword id="KW-1015">Disulfide bond</keyword>
<keyword id="KW-0256">Endoplasmic reticulum</keyword>
<keyword id="KW-0936">Ethylene signaling pathway</keyword>
<keyword id="KW-0418">Kinase</keyword>
<keyword id="KW-0472">Membrane</keyword>
<keyword id="KW-0479">Metal-binding</keyword>
<keyword id="KW-0547">Nucleotide-binding</keyword>
<keyword id="KW-0597">Phosphoprotein</keyword>
<keyword id="KW-0675">Receptor</keyword>
<keyword id="KW-1185">Reference proteome</keyword>
<keyword id="KW-0808">Transferase</keyword>
<keyword id="KW-0812">Transmembrane</keyword>
<keyword id="KW-1133">Transmembrane helix</keyword>
<keyword id="KW-0902">Two-component regulatory system</keyword>
<name>ETR1_TOBAC</name>
<dbReference type="EC" id="2.7.13.3"/>
<dbReference type="EMBL" id="AF022727">
    <property type="protein sequence ID" value="AAB97160.1"/>
    <property type="molecule type" value="mRNA"/>
</dbReference>
<dbReference type="PIR" id="T01897">
    <property type="entry name" value="T01897"/>
</dbReference>
<dbReference type="SMR" id="O48929"/>
<dbReference type="STRING" id="4097.O48929"/>
<dbReference type="PaxDb" id="4097-O48929"/>
<dbReference type="BRENDA" id="2.7.13.3">
    <property type="organism ID" value="3645"/>
</dbReference>
<dbReference type="Proteomes" id="UP000084051">
    <property type="component" value="Unplaced"/>
</dbReference>
<dbReference type="GO" id="GO:0005783">
    <property type="term" value="C:endoplasmic reticulum"/>
    <property type="evidence" value="ECO:0000318"/>
    <property type="project" value="GO_Central"/>
</dbReference>
<dbReference type="GO" id="GO:0005789">
    <property type="term" value="C:endoplasmic reticulum membrane"/>
    <property type="evidence" value="ECO:0007669"/>
    <property type="project" value="UniProtKB-SubCell"/>
</dbReference>
<dbReference type="GO" id="GO:0005524">
    <property type="term" value="F:ATP binding"/>
    <property type="evidence" value="ECO:0007669"/>
    <property type="project" value="UniProtKB-KW"/>
</dbReference>
<dbReference type="GO" id="GO:0051740">
    <property type="term" value="F:ethylene binding"/>
    <property type="evidence" value="ECO:0000318"/>
    <property type="project" value="GO_Central"/>
</dbReference>
<dbReference type="GO" id="GO:0038199">
    <property type="term" value="F:ethylene receptor activity"/>
    <property type="evidence" value="ECO:0000318"/>
    <property type="project" value="GO_Central"/>
</dbReference>
<dbReference type="GO" id="GO:0046872">
    <property type="term" value="F:metal ion binding"/>
    <property type="evidence" value="ECO:0007669"/>
    <property type="project" value="UniProtKB-KW"/>
</dbReference>
<dbReference type="GO" id="GO:0000155">
    <property type="term" value="F:phosphorelay sensor kinase activity"/>
    <property type="evidence" value="ECO:0007669"/>
    <property type="project" value="InterPro"/>
</dbReference>
<dbReference type="GO" id="GO:0010105">
    <property type="term" value="P:negative regulation of ethylene-activated signaling pathway"/>
    <property type="evidence" value="ECO:0007669"/>
    <property type="project" value="UniProtKB-ARBA"/>
</dbReference>
<dbReference type="CDD" id="cd16922">
    <property type="entry name" value="HATPase_EvgS-ArcB-TorS-like"/>
    <property type="match status" value="1"/>
</dbReference>
<dbReference type="CDD" id="cd00082">
    <property type="entry name" value="HisKA"/>
    <property type="match status" value="1"/>
</dbReference>
<dbReference type="CDD" id="cd19933">
    <property type="entry name" value="REC_ETR-like"/>
    <property type="match status" value="1"/>
</dbReference>
<dbReference type="FunFam" id="3.40.50.2300:FF:000192">
    <property type="entry name" value="Ethylene receptor"/>
    <property type="match status" value="1"/>
</dbReference>
<dbReference type="FunFam" id="1.10.287.130:FF:000004">
    <property type="entry name" value="Ethylene receptor 1"/>
    <property type="match status" value="1"/>
</dbReference>
<dbReference type="FunFam" id="3.30.565.10:FF:000030">
    <property type="entry name" value="Ethylene receptor 1"/>
    <property type="match status" value="1"/>
</dbReference>
<dbReference type="FunFam" id="3.30.450.40:FF:000026">
    <property type="entry name" value="Ethylene response sensor"/>
    <property type="match status" value="1"/>
</dbReference>
<dbReference type="Gene3D" id="1.10.287.130">
    <property type="match status" value="1"/>
</dbReference>
<dbReference type="Gene3D" id="3.30.450.40">
    <property type="match status" value="1"/>
</dbReference>
<dbReference type="Gene3D" id="3.40.50.2300">
    <property type="match status" value="1"/>
</dbReference>
<dbReference type="Gene3D" id="3.30.565.10">
    <property type="entry name" value="Histidine kinase-like ATPase, C-terminal domain"/>
    <property type="match status" value="1"/>
</dbReference>
<dbReference type="InterPro" id="IPR011006">
    <property type="entry name" value="CheY-like_superfamily"/>
</dbReference>
<dbReference type="InterPro" id="IPR014525">
    <property type="entry name" value="ETR"/>
</dbReference>
<dbReference type="InterPro" id="IPR003018">
    <property type="entry name" value="GAF"/>
</dbReference>
<dbReference type="InterPro" id="IPR029016">
    <property type="entry name" value="GAF-like_dom_sf"/>
</dbReference>
<dbReference type="InterPro" id="IPR036890">
    <property type="entry name" value="HATPase_C_sf"/>
</dbReference>
<dbReference type="InterPro" id="IPR005467">
    <property type="entry name" value="His_kinase_dom"/>
</dbReference>
<dbReference type="InterPro" id="IPR003661">
    <property type="entry name" value="HisK_dim/P_dom"/>
</dbReference>
<dbReference type="InterPro" id="IPR036097">
    <property type="entry name" value="HisK_dim/P_sf"/>
</dbReference>
<dbReference type="InterPro" id="IPR004358">
    <property type="entry name" value="Sig_transdc_His_kin-like_C"/>
</dbReference>
<dbReference type="InterPro" id="IPR001789">
    <property type="entry name" value="Sig_transdc_resp-reg_receiver"/>
</dbReference>
<dbReference type="PANTHER" id="PTHR24423:SF615">
    <property type="entry name" value="ETHYLENE RECEPTOR 1"/>
    <property type="match status" value="1"/>
</dbReference>
<dbReference type="PANTHER" id="PTHR24423">
    <property type="entry name" value="TWO-COMPONENT SENSOR HISTIDINE KINASE"/>
    <property type="match status" value="1"/>
</dbReference>
<dbReference type="Pfam" id="PF25487">
    <property type="entry name" value="ETR1_N"/>
    <property type="match status" value="1"/>
</dbReference>
<dbReference type="Pfam" id="PF01590">
    <property type="entry name" value="GAF"/>
    <property type="match status" value="1"/>
</dbReference>
<dbReference type="Pfam" id="PF02518">
    <property type="entry name" value="HATPase_c"/>
    <property type="match status" value="1"/>
</dbReference>
<dbReference type="Pfam" id="PF00512">
    <property type="entry name" value="HisKA"/>
    <property type="match status" value="1"/>
</dbReference>
<dbReference type="Pfam" id="PF00072">
    <property type="entry name" value="Response_reg"/>
    <property type="match status" value="1"/>
</dbReference>
<dbReference type="PIRSF" id="PIRSF026389">
    <property type="entry name" value="Ethyln_sen_HK"/>
    <property type="match status" value="1"/>
</dbReference>
<dbReference type="PRINTS" id="PR00344">
    <property type="entry name" value="BCTRLSENSOR"/>
</dbReference>
<dbReference type="SMART" id="SM00065">
    <property type="entry name" value="GAF"/>
    <property type="match status" value="1"/>
</dbReference>
<dbReference type="SMART" id="SM00387">
    <property type="entry name" value="HATPase_c"/>
    <property type="match status" value="1"/>
</dbReference>
<dbReference type="SMART" id="SM00388">
    <property type="entry name" value="HisKA"/>
    <property type="match status" value="1"/>
</dbReference>
<dbReference type="SMART" id="SM00448">
    <property type="entry name" value="REC"/>
    <property type="match status" value="1"/>
</dbReference>
<dbReference type="SUPFAM" id="SSF55874">
    <property type="entry name" value="ATPase domain of HSP90 chaperone/DNA topoisomerase II/histidine kinase"/>
    <property type="match status" value="1"/>
</dbReference>
<dbReference type="SUPFAM" id="SSF52172">
    <property type="entry name" value="CheY-like"/>
    <property type="match status" value="1"/>
</dbReference>
<dbReference type="SUPFAM" id="SSF55781">
    <property type="entry name" value="GAF domain-like"/>
    <property type="match status" value="1"/>
</dbReference>
<dbReference type="SUPFAM" id="SSF47384">
    <property type="entry name" value="Homodimeric domain of signal transducing histidine kinase"/>
    <property type="match status" value="1"/>
</dbReference>
<dbReference type="PROSITE" id="PS50109">
    <property type="entry name" value="HIS_KIN"/>
    <property type="match status" value="1"/>
</dbReference>
<dbReference type="PROSITE" id="PS50110">
    <property type="entry name" value="RESPONSE_REGULATORY"/>
    <property type="match status" value="1"/>
</dbReference>
<gene>
    <name type="primary">ETR1</name>
</gene>
<sequence>MDCNCFDPQWPADELLMKYQYISDFFIAVAYFSIPIELVYFVQKSAVFPYRWVLVQFGAFIVLCGATHLINLWTSTAHTRTLAIVMTTAKVLTAVVSCATALMLVHIIPDLLSVKTRELFLKNKAAELDREMGLIRTQEETGRYVRMLTHEIRSTLDRHTILKTTLVELGRTLALEECALWMPTPPGLELQLSYTLRHQNPIGFTVPIQLPVINQVFGTNRAVKISPNSPVARLRPAGKYMPGEVVAVRVPLLHLSNFQINDWPELSTKRYALMVLMLPSGSARQWHVHELELVEVVADQVAVALSHAAILEESMRARDLLMEQNVALDLARREAEMAVRARNDFLAVMNHEMRTPMHAIIALSSLLQETELTPEQRLMVETILKSSNLLATLINDVLDLSRLEDGSLQLDVGTFNLHVLFRKVLNLIKPIASVKNCLSRLTCLQICPEFAIGDEKRLMQILLNVVGNAVKFSKEGSVSISAVAAKSESLSDPRAPEFFPVQSENHFYLRVQVKDTGSGINPQDIPKLFCKFAQNQALATKSSGGTGLGLAISKRFVNLMEGHIWIESEGLGKGSTAIFIVKLGIPGRSNEPKLPFMPRLPANHMQMTFQGLKVLIMDDNGFSRMVTKGLLVHLGCDVTTVSSGDECLRVLTQEHKVVFMDVSIPGIDCYEVAVQIHEKFGKHHNRPLIVALTGNTDRVTKENCMRVGMDGVILKPVSVDKMRSVLSELLEHGVILQS</sequence>
<reference key="1">
    <citation type="online journal article" date="1997" name="Plant Gene Register">
        <title>Isolation and characterization of a tobacco cDNA encoding an ETR1 homolog.</title>
        <authorList>
            <person name="Knoester M."/>
            <person name="Hennig J."/>
            <person name="van Loon L.C."/>
            <person name="Bol J.F."/>
            <person name="Linthorst H.J.M."/>
        </authorList>
        <locator>PGR97-188</locator>
    </citation>
    <scope>NUCLEOTIDE SEQUENCE [MRNA]</scope>
    <source>
        <strain>cv. Samsun NN</strain>
        <tissue>Leaf</tissue>
    </source>
</reference>
<evidence type="ECO:0000250" key="1"/>
<evidence type="ECO:0000255" key="2"/>
<evidence type="ECO:0000255" key="3">
    <source>
        <dbReference type="PROSITE-ProRule" id="PRU00107"/>
    </source>
</evidence>
<evidence type="ECO:0000255" key="4">
    <source>
        <dbReference type="PROSITE-ProRule" id="PRU00169"/>
    </source>
</evidence>
<evidence type="ECO:0000305" key="5"/>
<proteinExistence type="evidence at transcript level"/>
<protein>
    <recommendedName>
        <fullName>Ethylene receptor</fullName>
        <ecNumber>2.7.13.3</ecNumber>
    </recommendedName>
    <alternativeName>
        <fullName>NT-ETR1</fullName>
    </alternativeName>
</protein>
<comment type="function">
    <text evidence="1">May act early in the ethylene signal transduction pathway, possibly as an ethylene receptor, or as a regulator of the pathway.</text>
</comment>
<comment type="catalytic activity">
    <reaction>
        <text>ATP + protein L-histidine = ADP + protein N-phospho-L-histidine.</text>
        <dbReference type="EC" id="2.7.13.3"/>
    </reaction>
</comment>
<comment type="cofactor">
    <cofactor evidence="1">
        <name>Cu cation</name>
        <dbReference type="ChEBI" id="CHEBI:23378"/>
    </cofactor>
    <text evidence="1">Binds 1 copper ion per dimer.</text>
</comment>
<comment type="subunit">
    <text evidence="1">Homodimer; disulfide-linked.</text>
</comment>
<comment type="subcellular location">
    <subcellularLocation>
        <location evidence="1">Endoplasmic reticulum membrane</location>
        <topology evidence="1">Multi-pass membrane protein</topology>
    </subcellularLocation>
</comment>
<comment type="induction">
    <text>Constitutive expression. Not induced by senescence, wounding, application of ethephon or infection with virus.</text>
</comment>
<comment type="PTM">
    <text evidence="1">Activation probably requires a transfer of a phosphate group between a His in the transmitter domain and an Asp of the receiver domain.</text>
</comment>
<comment type="similarity">
    <text evidence="5">Belongs to the ethylene receptor family.</text>
</comment>
<organism>
    <name type="scientific">Nicotiana tabacum</name>
    <name type="common">Common tobacco</name>
    <dbReference type="NCBI Taxonomy" id="4097"/>
    <lineage>
        <taxon>Eukaryota</taxon>
        <taxon>Viridiplantae</taxon>
        <taxon>Streptophyta</taxon>
        <taxon>Embryophyta</taxon>
        <taxon>Tracheophyta</taxon>
        <taxon>Spermatophyta</taxon>
        <taxon>Magnoliopsida</taxon>
        <taxon>eudicotyledons</taxon>
        <taxon>Gunneridae</taxon>
        <taxon>Pentapetalae</taxon>
        <taxon>asterids</taxon>
        <taxon>lamiids</taxon>
        <taxon>Solanales</taxon>
        <taxon>Solanaceae</taxon>
        <taxon>Nicotianoideae</taxon>
        <taxon>Nicotianeae</taxon>
        <taxon>Nicotiana</taxon>
    </lineage>
</organism>